<accession>P9WIH5</accession>
<accession>L0TB71</accession>
<accession>P65684</accession>
<accession>Q93IG5</accession>
<organism>
    <name type="scientific">Mycobacterium tuberculosis (strain ATCC 25618 / H37Rv)</name>
    <dbReference type="NCBI Taxonomy" id="83332"/>
    <lineage>
        <taxon>Bacteria</taxon>
        <taxon>Bacillati</taxon>
        <taxon>Actinomycetota</taxon>
        <taxon>Actinomycetes</taxon>
        <taxon>Mycobacteriales</taxon>
        <taxon>Mycobacteriaceae</taxon>
        <taxon>Mycobacterium</taxon>
        <taxon>Mycobacterium tuberculosis complex</taxon>
    </lineage>
</organism>
<protein>
    <recommendedName>
        <fullName>Uncharacterized protein Rv2047c</fullName>
    </recommendedName>
</protein>
<name>Y2047_MYCTU</name>
<comment type="similarity">
    <text evidence="1">Belongs to the PEP-utilizing enzyme family.</text>
</comment>
<feature type="chain" id="PRO_0000147101" description="Uncharacterized protein Rv2047c">
    <location>
        <begin position="1"/>
        <end position="854"/>
    </location>
</feature>
<evidence type="ECO:0000305" key="1"/>
<gene>
    <name type="ordered locus">Rv2047c</name>
</gene>
<dbReference type="EMBL" id="AL123456">
    <property type="protein sequence ID" value="CCP44820.1"/>
    <property type="molecule type" value="Genomic_DNA"/>
</dbReference>
<dbReference type="PIR" id="F70944">
    <property type="entry name" value="F70944"/>
</dbReference>
<dbReference type="RefSeq" id="NP_216563.1">
    <property type="nucleotide sequence ID" value="NC_000962.3"/>
</dbReference>
<dbReference type="RefSeq" id="WP_003410309.1">
    <property type="nucleotide sequence ID" value="NZ_NVQJ01000046.1"/>
</dbReference>
<dbReference type="SMR" id="P9WIH5"/>
<dbReference type="STRING" id="83332.Rv2047c"/>
<dbReference type="PaxDb" id="83332-Rv2047c"/>
<dbReference type="DNASU" id="888529"/>
<dbReference type="GeneID" id="888529"/>
<dbReference type="KEGG" id="mtu:Rv2047c"/>
<dbReference type="KEGG" id="mtv:RVBD_2047c"/>
<dbReference type="PATRIC" id="fig|83332.111.peg.2282"/>
<dbReference type="TubercuList" id="Rv2047c"/>
<dbReference type="eggNOG" id="COG0451">
    <property type="taxonomic scope" value="Bacteria"/>
</dbReference>
<dbReference type="eggNOG" id="COG3848">
    <property type="taxonomic scope" value="Bacteria"/>
</dbReference>
<dbReference type="InParanoid" id="P9WIH5"/>
<dbReference type="OrthoDB" id="9765468at2"/>
<dbReference type="Proteomes" id="UP000001584">
    <property type="component" value="Chromosome"/>
</dbReference>
<dbReference type="GO" id="GO:0009274">
    <property type="term" value="C:peptidoglycan-based cell wall"/>
    <property type="evidence" value="ECO:0007005"/>
    <property type="project" value="MTBBASE"/>
</dbReference>
<dbReference type="GO" id="GO:0016772">
    <property type="term" value="F:transferase activity, transferring phosphorus-containing groups"/>
    <property type="evidence" value="ECO:0007669"/>
    <property type="project" value="InterPro"/>
</dbReference>
<dbReference type="FunFam" id="3.50.30.10:FF:000006">
    <property type="entry name" value="UDP-glucose 4-epimerase GalE4"/>
    <property type="match status" value="1"/>
</dbReference>
<dbReference type="Gene3D" id="3.40.50.720">
    <property type="entry name" value="NAD(P)-binding Rossmann-like Domain"/>
    <property type="match status" value="1"/>
</dbReference>
<dbReference type="Gene3D" id="3.50.30.10">
    <property type="entry name" value="Phosphohistidine domain"/>
    <property type="match status" value="1"/>
</dbReference>
<dbReference type="InterPro" id="IPR001509">
    <property type="entry name" value="Epimerase_deHydtase"/>
</dbReference>
<dbReference type="InterPro" id="IPR036291">
    <property type="entry name" value="NAD(P)-bd_dom_sf"/>
</dbReference>
<dbReference type="InterPro" id="IPR008279">
    <property type="entry name" value="PEP-util_enz_mobile_dom"/>
</dbReference>
<dbReference type="InterPro" id="IPR051549">
    <property type="entry name" value="PEP_Utilizing_Enz"/>
</dbReference>
<dbReference type="InterPro" id="IPR036637">
    <property type="entry name" value="Phosphohistidine_dom_sf"/>
</dbReference>
<dbReference type="NCBIfam" id="NF004520">
    <property type="entry name" value="PRK05865.1"/>
    <property type="match status" value="1"/>
</dbReference>
<dbReference type="PANTHER" id="PTHR43615">
    <property type="entry name" value="PHOSPHOENOLPYRUVATE SYNTHASE-RELATED"/>
    <property type="match status" value="1"/>
</dbReference>
<dbReference type="PANTHER" id="PTHR43615:SF1">
    <property type="entry name" value="PPDK_N DOMAIN-CONTAINING PROTEIN"/>
    <property type="match status" value="1"/>
</dbReference>
<dbReference type="Pfam" id="PF01370">
    <property type="entry name" value="Epimerase"/>
    <property type="match status" value="1"/>
</dbReference>
<dbReference type="Pfam" id="PF00391">
    <property type="entry name" value="PEP-utilizers"/>
    <property type="match status" value="1"/>
</dbReference>
<dbReference type="SUPFAM" id="SSF51735">
    <property type="entry name" value="NAD(P)-binding Rossmann-fold domains"/>
    <property type="match status" value="1"/>
</dbReference>
<dbReference type="SUPFAM" id="SSF52009">
    <property type="entry name" value="Phosphohistidine domain"/>
    <property type="match status" value="1"/>
</dbReference>
<reference key="1">
    <citation type="journal article" date="1998" name="Nature">
        <title>Deciphering the biology of Mycobacterium tuberculosis from the complete genome sequence.</title>
        <authorList>
            <person name="Cole S.T."/>
            <person name="Brosch R."/>
            <person name="Parkhill J."/>
            <person name="Garnier T."/>
            <person name="Churcher C.M."/>
            <person name="Harris D.E."/>
            <person name="Gordon S.V."/>
            <person name="Eiglmeier K."/>
            <person name="Gas S."/>
            <person name="Barry C.E. III"/>
            <person name="Tekaia F."/>
            <person name="Badcock K."/>
            <person name="Basham D."/>
            <person name="Brown D."/>
            <person name="Chillingworth T."/>
            <person name="Connor R."/>
            <person name="Davies R.M."/>
            <person name="Devlin K."/>
            <person name="Feltwell T."/>
            <person name="Gentles S."/>
            <person name="Hamlin N."/>
            <person name="Holroyd S."/>
            <person name="Hornsby T."/>
            <person name="Jagels K."/>
            <person name="Krogh A."/>
            <person name="McLean J."/>
            <person name="Moule S."/>
            <person name="Murphy L.D."/>
            <person name="Oliver S."/>
            <person name="Osborne J."/>
            <person name="Quail M.A."/>
            <person name="Rajandream M.A."/>
            <person name="Rogers J."/>
            <person name="Rutter S."/>
            <person name="Seeger K."/>
            <person name="Skelton S."/>
            <person name="Squares S."/>
            <person name="Squares R."/>
            <person name="Sulston J.E."/>
            <person name="Taylor K."/>
            <person name="Whitehead S."/>
            <person name="Barrell B.G."/>
        </authorList>
    </citation>
    <scope>NUCLEOTIDE SEQUENCE [LARGE SCALE GENOMIC DNA]</scope>
    <source>
        <strain>ATCC 25618 / H37Rv</strain>
    </source>
</reference>
<reference key="2">
    <citation type="journal article" date="2011" name="Mol. Cell. Proteomics">
        <title>Proteogenomic analysis of Mycobacterium tuberculosis by high resolution mass spectrometry.</title>
        <authorList>
            <person name="Kelkar D.S."/>
            <person name="Kumar D."/>
            <person name="Kumar P."/>
            <person name="Balakrishnan L."/>
            <person name="Muthusamy B."/>
            <person name="Yadav A.K."/>
            <person name="Shrivastava P."/>
            <person name="Marimuthu A."/>
            <person name="Anand S."/>
            <person name="Sundaram H."/>
            <person name="Kingsbury R."/>
            <person name="Harsha H.C."/>
            <person name="Nair B."/>
            <person name="Prasad T.S."/>
            <person name="Chauhan D.S."/>
            <person name="Katoch K."/>
            <person name="Katoch V.M."/>
            <person name="Kumar P."/>
            <person name="Chaerkady R."/>
            <person name="Ramachandran S."/>
            <person name="Dash D."/>
            <person name="Pandey A."/>
        </authorList>
    </citation>
    <scope>IDENTIFICATION BY MASS SPECTROMETRY [LARGE SCALE ANALYSIS]</scope>
    <source>
        <strain>ATCC 25618 / H37Rv</strain>
    </source>
</reference>
<keyword id="KW-1185">Reference proteome</keyword>
<sequence>MRIAVTGASGVLGRGLTARLLSQGHEVVGIARHRPDSWPSSADFIAADIRDATAVESAMTGADVVAHCAWVRGRNDHINIDGTANVLKAMAETGTGRIVFTSSGHQPRVEQMLADCGLEWVAVRCALIFGRNVDNWVQRLFALPVLPAGYADRVVQVVHSDDAQRLLVRALLDTVIDSGPVNLAAPGELTFRRIAAALGRPMVPIGSPVLRRVTSFAELELLHSAPLMDVTLLRDRWGFQPAWNAEECLEDFTLAVRGRIGLGKRTFSLPWRLANIQDLPAVDSPADDGVAPRLAGPEGANGEFDTPIDPRFPTYLATNLSEALPGPFSPSSASVTVRGLRAGGVGIAERLRPSGVIQREIAMRTVAVFAHRLYGAITSAHFMAATVPFAKPATIVSNSGFFGPSMASLPIFGAQRPPSESSRARRWLRTLRNIGVFGVNLVGLSAGSPRDTDAYVADVDRLERLAFDNLATHDDRRLLSLILLARDHVVHGWVLASGSFMLCAAFNVLLRGLCGRDTAPAAGPELVSARSVEAVQRLVAAARRDPVVIRLLAEPGERLDKLAVEAPEFHSAVLAELTLIGHRGPAEVEMAATSYADNPELLVRMVAKTLRAVPAPQPPTPVIPLRAKPVALLAARQLRDREVRRDRMVRAIWVLRALLREYGRRLTEAGVFDTPDDVFYLLVDEIDALPADVSGLVARRRAEQRRLAGIVPPTVFSGSWEPSPSSAAALAAGDTLRGVGVCGGRVRGRVRIVRPETIDDLQPGEILVAEVTDVGYTAAFCYAAAVVTELGGPMSHAAVVAREFGFPCVVDAQGATRFLPPGALVEVDGATGEIHVVELASEDGPALPGSDLSR</sequence>
<proteinExistence type="evidence at protein level"/>